<proteinExistence type="inferred from homology"/>
<accession>F4IC29</accession>
<accession>Q9LMI6</accession>
<comment type="function">
    <text evidence="1">Heavy-metal-binding protein.</text>
</comment>
<comment type="similarity">
    <text evidence="6">Belongs to the HIPP family.</text>
</comment>
<comment type="sequence caution" evidence="6">
    <conflict type="erroneous initiation">
        <sequence resource="EMBL-CDS" id="AAF82161"/>
    </conflict>
    <text>Extended N-terminus.</text>
</comment>
<evidence type="ECO:0000250" key="1">
    <source>
        <dbReference type="UniProtKB" id="Q9LZF1"/>
    </source>
</evidence>
<evidence type="ECO:0000250" key="2">
    <source>
        <dbReference type="UniProtKB" id="Q9SZN7"/>
    </source>
</evidence>
<evidence type="ECO:0000255" key="3">
    <source>
        <dbReference type="PROSITE-ProRule" id="PRU00280"/>
    </source>
</evidence>
<evidence type="ECO:0000303" key="4">
    <source>
    </source>
</evidence>
<evidence type="ECO:0000303" key="5">
    <source>
    </source>
</evidence>
<evidence type="ECO:0000305" key="6"/>
<evidence type="ECO:0000312" key="7">
    <source>
        <dbReference type="Araport" id="AT1G06330"/>
    </source>
</evidence>
<evidence type="ECO:0000312" key="8">
    <source>
        <dbReference type="EMBL" id="AAF82161.1"/>
    </source>
</evidence>
<evidence type="ECO:0000312" key="9">
    <source>
        <dbReference type="Proteomes" id="UP000006548"/>
    </source>
</evidence>
<reference key="1">
    <citation type="journal article" date="2000" name="Nature">
        <title>Sequence and analysis of chromosome 1 of the plant Arabidopsis thaliana.</title>
        <authorList>
            <person name="Theologis A."/>
            <person name="Ecker J.R."/>
            <person name="Palm C.J."/>
            <person name="Federspiel N.A."/>
            <person name="Kaul S."/>
            <person name="White O."/>
            <person name="Alonso J."/>
            <person name="Altafi H."/>
            <person name="Araujo R."/>
            <person name="Bowman C.L."/>
            <person name="Brooks S.Y."/>
            <person name="Buehler E."/>
            <person name="Chan A."/>
            <person name="Chao Q."/>
            <person name="Chen H."/>
            <person name="Cheuk R.F."/>
            <person name="Chin C.W."/>
            <person name="Chung M.K."/>
            <person name="Conn L."/>
            <person name="Conway A.B."/>
            <person name="Conway A.R."/>
            <person name="Creasy T.H."/>
            <person name="Dewar K."/>
            <person name="Dunn P."/>
            <person name="Etgu P."/>
            <person name="Feldblyum T.V."/>
            <person name="Feng J.-D."/>
            <person name="Fong B."/>
            <person name="Fujii C.Y."/>
            <person name="Gill J.E."/>
            <person name="Goldsmith A.D."/>
            <person name="Haas B."/>
            <person name="Hansen N.F."/>
            <person name="Hughes B."/>
            <person name="Huizar L."/>
            <person name="Hunter J.L."/>
            <person name="Jenkins J."/>
            <person name="Johnson-Hopson C."/>
            <person name="Khan S."/>
            <person name="Khaykin E."/>
            <person name="Kim C.J."/>
            <person name="Koo H.L."/>
            <person name="Kremenetskaia I."/>
            <person name="Kurtz D.B."/>
            <person name="Kwan A."/>
            <person name="Lam B."/>
            <person name="Langin-Hooper S."/>
            <person name="Lee A."/>
            <person name="Lee J.M."/>
            <person name="Lenz C.A."/>
            <person name="Li J.H."/>
            <person name="Li Y.-P."/>
            <person name="Lin X."/>
            <person name="Liu S.X."/>
            <person name="Liu Z.A."/>
            <person name="Luros J.S."/>
            <person name="Maiti R."/>
            <person name="Marziali A."/>
            <person name="Militscher J."/>
            <person name="Miranda M."/>
            <person name="Nguyen M."/>
            <person name="Nierman W.C."/>
            <person name="Osborne B.I."/>
            <person name="Pai G."/>
            <person name="Peterson J."/>
            <person name="Pham P.K."/>
            <person name="Rizzo M."/>
            <person name="Rooney T."/>
            <person name="Rowley D."/>
            <person name="Sakano H."/>
            <person name="Salzberg S.L."/>
            <person name="Schwartz J.R."/>
            <person name="Shinn P."/>
            <person name="Southwick A.M."/>
            <person name="Sun H."/>
            <person name="Tallon L.J."/>
            <person name="Tambunga G."/>
            <person name="Toriumi M.J."/>
            <person name="Town C.D."/>
            <person name="Utterback T."/>
            <person name="Van Aken S."/>
            <person name="Vaysberg M."/>
            <person name="Vysotskaia V.S."/>
            <person name="Walker M."/>
            <person name="Wu D."/>
            <person name="Yu G."/>
            <person name="Fraser C.M."/>
            <person name="Venter J.C."/>
            <person name="Davis R.W."/>
        </authorList>
    </citation>
    <scope>NUCLEOTIDE SEQUENCE [LARGE SCALE GENOMIC DNA]</scope>
    <source>
        <strain>cv. Columbia</strain>
    </source>
</reference>
<reference key="2">
    <citation type="journal article" date="2017" name="Plant J.">
        <title>Araport11: a complete reannotation of the Arabidopsis thaliana reference genome.</title>
        <authorList>
            <person name="Cheng C.Y."/>
            <person name="Krishnakumar V."/>
            <person name="Chan A.P."/>
            <person name="Thibaud-Nissen F."/>
            <person name="Schobel S."/>
            <person name="Town C.D."/>
        </authorList>
    </citation>
    <scope>GENOME REANNOTATION</scope>
    <source>
        <strain>cv. Columbia</strain>
    </source>
</reference>
<reference key="3">
    <citation type="journal article" date="2010" name="Metallomics">
        <title>Metallochaperone-like genes in Arabidopsis thaliana.</title>
        <authorList>
            <person name="Tehseen M."/>
            <person name="Cairns N."/>
            <person name="Sherson S."/>
            <person name="Cobbett C.S."/>
        </authorList>
    </citation>
    <scope>GENE FAMILY</scope>
    <scope>NOMENCLATURE</scope>
</reference>
<reference key="4">
    <citation type="journal article" date="2013" name="FEBS J.">
        <title>Heavy metal-associated isoprenylated plant protein (HIPP): characterization of a family of proteins exclusive to plants.</title>
        <authorList>
            <person name="de Abreu-Neto J.B."/>
            <person name="Turchetto-Zolet A.C."/>
            <person name="de Oliveira L.F."/>
            <person name="Zanettini M.H."/>
            <person name="Margis-Pinheiro M."/>
        </authorList>
    </citation>
    <scope>GENE FAMILY</scope>
    <scope>NOMENCLATURE</scope>
</reference>
<gene>
    <name evidence="4 5" type="primary">HIPP28</name>
    <name evidence="7" type="ordered locus">At1g06330</name>
    <name evidence="8" type="ORF">T2D23.3</name>
</gene>
<dbReference type="EMBL" id="AC068143">
    <property type="protein sequence ID" value="AAF82161.1"/>
    <property type="status" value="ALT_INIT"/>
    <property type="molecule type" value="Genomic_DNA"/>
</dbReference>
<dbReference type="EMBL" id="CP002684">
    <property type="status" value="NOT_ANNOTATED_CDS"/>
    <property type="molecule type" value="Genomic_DNA"/>
</dbReference>
<dbReference type="PIR" id="A86199">
    <property type="entry name" value="A86199"/>
</dbReference>
<dbReference type="SMR" id="F4IC29"/>
<dbReference type="FunCoup" id="F4IC29">
    <property type="interactions" value="47"/>
</dbReference>
<dbReference type="STRING" id="3702.F4IC29"/>
<dbReference type="PaxDb" id="3702-AT1G06330.1"/>
<dbReference type="Araport" id="AT1G06330"/>
<dbReference type="TAIR" id="AT1G06330"/>
<dbReference type="eggNOG" id="KOG1603">
    <property type="taxonomic scope" value="Eukaryota"/>
</dbReference>
<dbReference type="HOGENOM" id="CLU_100095_0_1_1"/>
<dbReference type="InParanoid" id="F4IC29"/>
<dbReference type="PRO" id="PR:F4IC29"/>
<dbReference type="Proteomes" id="UP000006548">
    <property type="component" value="Chromosome 1"/>
</dbReference>
<dbReference type="ExpressionAtlas" id="F4IC29">
    <property type="expression patterns" value="baseline and differential"/>
</dbReference>
<dbReference type="GO" id="GO:0046872">
    <property type="term" value="F:metal ion binding"/>
    <property type="evidence" value="ECO:0007669"/>
    <property type="project" value="UniProtKB-KW"/>
</dbReference>
<dbReference type="CDD" id="cd00371">
    <property type="entry name" value="HMA"/>
    <property type="match status" value="1"/>
</dbReference>
<dbReference type="Gene3D" id="3.30.70.100">
    <property type="match status" value="1"/>
</dbReference>
<dbReference type="InterPro" id="IPR006121">
    <property type="entry name" value="HMA_dom"/>
</dbReference>
<dbReference type="InterPro" id="IPR036163">
    <property type="entry name" value="HMA_dom_sf"/>
</dbReference>
<dbReference type="PANTHER" id="PTHR22814">
    <property type="entry name" value="COPPER TRANSPORT PROTEIN ATOX1-RELATED"/>
    <property type="match status" value="1"/>
</dbReference>
<dbReference type="PANTHER" id="PTHR22814:SF351">
    <property type="entry name" value="HEAVY METAL-ASSOCIATED ISOPRENYLATED PLANT PROTEIN 28"/>
    <property type="match status" value="1"/>
</dbReference>
<dbReference type="Pfam" id="PF00403">
    <property type="entry name" value="HMA"/>
    <property type="match status" value="1"/>
</dbReference>
<dbReference type="SUPFAM" id="SSF55008">
    <property type="entry name" value="HMA, heavy metal-associated domain"/>
    <property type="match status" value="1"/>
</dbReference>
<dbReference type="PROSITE" id="PS50846">
    <property type="entry name" value="HMA_2"/>
    <property type="match status" value="1"/>
</dbReference>
<feature type="chain" id="PRO_0000437833" description="Heavy metal-associated isoprenylated plant protein 28">
    <location>
        <begin position="1"/>
        <end position="156"/>
    </location>
</feature>
<feature type="propeptide" id="PRO_0000437834" description="Removed in mature form" evidence="6">
    <location>
        <begin position="157"/>
        <end position="159"/>
    </location>
</feature>
<feature type="domain" description="HMA" evidence="3">
    <location>
        <begin position="10"/>
        <end position="73"/>
    </location>
</feature>
<feature type="binding site" evidence="3">
    <location>
        <position position="21"/>
    </location>
    <ligand>
        <name>a metal cation</name>
        <dbReference type="ChEBI" id="CHEBI:25213"/>
    </ligand>
</feature>
<feature type="binding site" evidence="3">
    <location>
        <position position="24"/>
    </location>
    <ligand>
        <name>a metal cation</name>
        <dbReference type="ChEBI" id="CHEBI:25213"/>
    </ligand>
</feature>
<feature type="modified residue" description="Cysteine methyl ester" evidence="2">
    <location>
        <position position="156"/>
    </location>
</feature>
<feature type="lipid moiety-binding region" description="S-farnesyl cysteine" evidence="2">
    <location>
        <position position="156"/>
    </location>
</feature>
<name>HIP28_ARATH</name>
<protein>
    <recommendedName>
        <fullName evidence="4 5">Heavy metal-associated isoprenylated plant protein 28</fullName>
        <shortName evidence="4 5">AtHIP28</shortName>
    </recommendedName>
</protein>
<organism evidence="9">
    <name type="scientific">Arabidopsis thaliana</name>
    <name type="common">Mouse-ear cress</name>
    <dbReference type="NCBI Taxonomy" id="3702"/>
    <lineage>
        <taxon>Eukaryota</taxon>
        <taxon>Viridiplantae</taxon>
        <taxon>Streptophyta</taxon>
        <taxon>Embryophyta</taxon>
        <taxon>Tracheophyta</taxon>
        <taxon>Spermatophyta</taxon>
        <taxon>Magnoliopsida</taxon>
        <taxon>eudicotyledons</taxon>
        <taxon>Gunneridae</taxon>
        <taxon>Pentapetalae</taxon>
        <taxon>rosids</taxon>
        <taxon>malvids</taxon>
        <taxon>Brassicales</taxon>
        <taxon>Brassicaceae</taxon>
        <taxon>Camelineae</taxon>
        <taxon>Arabidopsis</taxon>
    </lineage>
</organism>
<keyword id="KW-0449">Lipoprotein</keyword>
<keyword id="KW-0479">Metal-binding</keyword>
<keyword id="KW-0488">Methylation</keyword>
<keyword id="KW-0636">Prenylation</keyword>
<keyword id="KW-1185">Reference proteome</keyword>
<sequence>MNLTLNLIQLQTIEMRVHMDCVGCESRVKNALQKMRGVDAVEIDMVQQKVTVTGYADQKKVLKKVRKTGRRAELWQLPYNPDHMGGSSSNGGYFYNPQGCNGPINHAAPVPTSSYNYYKHGYDSNDYSSYRHHPVHASIFSHQTGSKFSDENPNACSIM</sequence>